<reference key="1">
    <citation type="journal article" date="2004" name="Nucleic Acids Res.">
        <title>Thermoadaptation trait revealed by the genome sequence of thermophilic Geobacillus kaustophilus.</title>
        <authorList>
            <person name="Takami H."/>
            <person name="Takaki Y."/>
            <person name="Chee G.-J."/>
            <person name="Nishi S."/>
            <person name="Shimamura S."/>
            <person name="Suzuki H."/>
            <person name="Matsui S."/>
            <person name="Uchiyama I."/>
        </authorList>
    </citation>
    <scope>NUCLEOTIDE SEQUENCE [LARGE SCALE GENOMIC DNA]</scope>
    <source>
        <strain>HTA426</strain>
    </source>
</reference>
<name>PYRDB_GEOKA</name>
<accession>Q5L0U1</accession>
<feature type="chain" id="PRO_1000024132" description="Dihydroorotate dehydrogenase B (NAD(+)), catalytic subunit">
    <location>
        <begin position="1"/>
        <end position="313"/>
    </location>
</feature>
<feature type="active site" description="Nucleophile">
    <location>
        <position position="130"/>
    </location>
</feature>
<feature type="binding site" evidence="1">
    <location>
        <position position="21"/>
    </location>
    <ligand>
        <name>FMN</name>
        <dbReference type="ChEBI" id="CHEBI:58210"/>
    </ligand>
</feature>
<feature type="binding site" evidence="1">
    <location>
        <begin position="45"/>
        <end position="46"/>
    </location>
    <ligand>
        <name>FMN</name>
        <dbReference type="ChEBI" id="CHEBI:58210"/>
    </ligand>
</feature>
<feature type="binding site" evidence="1">
    <location>
        <position position="45"/>
    </location>
    <ligand>
        <name>substrate</name>
    </ligand>
</feature>
<feature type="binding site" evidence="1">
    <location>
        <begin position="69"/>
        <end position="73"/>
    </location>
    <ligand>
        <name>substrate</name>
    </ligand>
</feature>
<feature type="binding site" evidence="1">
    <location>
        <position position="99"/>
    </location>
    <ligand>
        <name>FMN</name>
        <dbReference type="ChEBI" id="CHEBI:58210"/>
    </ligand>
</feature>
<feature type="binding site" evidence="1">
    <location>
        <position position="127"/>
    </location>
    <ligand>
        <name>FMN</name>
        <dbReference type="ChEBI" id="CHEBI:58210"/>
    </ligand>
</feature>
<feature type="binding site" evidence="1">
    <location>
        <position position="127"/>
    </location>
    <ligand>
        <name>substrate</name>
    </ligand>
</feature>
<feature type="binding site" evidence="1">
    <location>
        <position position="165"/>
    </location>
    <ligand>
        <name>FMN</name>
        <dbReference type="ChEBI" id="CHEBI:58210"/>
    </ligand>
</feature>
<feature type="binding site" evidence="1">
    <location>
        <position position="191"/>
    </location>
    <ligand>
        <name>FMN</name>
        <dbReference type="ChEBI" id="CHEBI:58210"/>
    </ligand>
</feature>
<feature type="binding site" evidence="1">
    <location>
        <begin position="192"/>
        <end position="193"/>
    </location>
    <ligand>
        <name>substrate</name>
    </ligand>
</feature>
<feature type="binding site" evidence="1">
    <location>
        <position position="217"/>
    </location>
    <ligand>
        <name>FMN</name>
        <dbReference type="ChEBI" id="CHEBI:58210"/>
    </ligand>
</feature>
<feature type="binding site" evidence="1">
    <location>
        <begin position="243"/>
        <end position="244"/>
    </location>
    <ligand>
        <name>FMN</name>
        <dbReference type="ChEBI" id="CHEBI:58210"/>
    </ligand>
</feature>
<feature type="binding site" evidence="1">
    <location>
        <begin position="265"/>
        <end position="266"/>
    </location>
    <ligand>
        <name>FMN</name>
        <dbReference type="ChEBI" id="CHEBI:58210"/>
    </ligand>
</feature>
<keyword id="KW-0963">Cytoplasm</keyword>
<keyword id="KW-0285">Flavoprotein</keyword>
<keyword id="KW-0288">FMN</keyword>
<keyword id="KW-0520">NAD</keyword>
<keyword id="KW-0560">Oxidoreductase</keyword>
<keyword id="KW-0665">Pyrimidine biosynthesis</keyword>
<keyword id="KW-1185">Reference proteome</keyword>
<proteinExistence type="inferred from homology"/>
<protein>
    <recommendedName>
        <fullName>Dihydroorotate dehydrogenase B (NAD(+)), catalytic subunit</fullName>
        <shortName>DHOD B</shortName>
        <shortName>DHODase B</shortName>
        <shortName>DHOdehase B</shortName>
        <ecNumber>1.3.1.14</ecNumber>
    </recommendedName>
    <alternativeName>
        <fullName>Dihydroorotate oxidase B</fullName>
    </alternativeName>
    <alternativeName>
        <fullName>Orotate reductase (NADH)</fullName>
    </alternativeName>
</protein>
<dbReference type="EC" id="1.3.1.14"/>
<dbReference type="EMBL" id="BA000043">
    <property type="protein sequence ID" value="BAD75439.1"/>
    <property type="molecule type" value="Genomic_DNA"/>
</dbReference>
<dbReference type="RefSeq" id="WP_011230654.1">
    <property type="nucleotide sequence ID" value="NC_006510.1"/>
</dbReference>
<dbReference type="SMR" id="Q5L0U1"/>
<dbReference type="STRING" id="235909.GK1154"/>
<dbReference type="KEGG" id="gka:GK1154"/>
<dbReference type="PATRIC" id="fig|235909.7.peg.1255"/>
<dbReference type="eggNOG" id="COG0167">
    <property type="taxonomic scope" value="Bacteria"/>
</dbReference>
<dbReference type="HOGENOM" id="CLU_042042_0_0_9"/>
<dbReference type="UniPathway" id="UPA00070">
    <property type="reaction ID" value="UER00945"/>
</dbReference>
<dbReference type="Proteomes" id="UP000001172">
    <property type="component" value="Chromosome"/>
</dbReference>
<dbReference type="GO" id="GO:0005737">
    <property type="term" value="C:cytoplasm"/>
    <property type="evidence" value="ECO:0007669"/>
    <property type="project" value="UniProtKB-SubCell"/>
</dbReference>
<dbReference type="GO" id="GO:0004589">
    <property type="term" value="F:dihydroorotate dehydrogenase (NAD+) activity"/>
    <property type="evidence" value="ECO:0007669"/>
    <property type="project" value="UniProtKB-EC"/>
</dbReference>
<dbReference type="GO" id="GO:0006207">
    <property type="term" value="P:'de novo' pyrimidine nucleobase biosynthetic process"/>
    <property type="evidence" value="ECO:0007669"/>
    <property type="project" value="InterPro"/>
</dbReference>
<dbReference type="GO" id="GO:0044205">
    <property type="term" value="P:'de novo' UMP biosynthetic process"/>
    <property type="evidence" value="ECO:0007669"/>
    <property type="project" value="UniProtKB-UniRule"/>
</dbReference>
<dbReference type="CDD" id="cd04740">
    <property type="entry name" value="DHOD_1B_like"/>
    <property type="match status" value="1"/>
</dbReference>
<dbReference type="FunFam" id="3.20.20.70:FF:000069">
    <property type="entry name" value="Dihydroorotate dehydrogenase"/>
    <property type="match status" value="1"/>
</dbReference>
<dbReference type="Gene3D" id="3.20.20.70">
    <property type="entry name" value="Aldolase class I"/>
    <property type="match status" value="1"/>
</dbReference>
<dbReference type="HAMAP" id="MF_00224">
    <property type="entry name" value="DHO_dh_type1"/>
    <property type="match status" value="1"/>
</dbReference>
<dbReference type="InterPro" id="IPR013785">
    <property type="entry name" value="Aldolase_TIM"/>
</dbReference>
<dbReference type="InterPro" id="IPR050074">
    <property type="entry name" value="DHO_dehydrogenase"/>
</dbReference>
<dbReference type="InterPro" id="IPR033888">
    <property type="entry name" value="DHOD_1B"/>
</dbReference>
<dbReference type="InterPro" id="IPR024920">
    <property type="entry name" value="Dihydroorotate_DH_1"/>
</dbReference>
<dbReference type="InterPro" id="IPR012135">
    <property type="entry name" value="Dihydroorotate_DH_1_2"/>
</dbReference>
<dbReference type="InterPro" id="IPR005720">
    <property type="entry name" value="Dihydroorotate_DH_cat"/>
</dbReference>
<dbReference type="InterPro" id="IPR001295">
    <property type="entry name" value="Dihydroorotate_DH_CS"/>
</dbReference>
<dbReference type="InterPro" id="IPR049622">
    <property type="entry name" value="Dihydroorotate_DH_I"/>
</dbReference>
<dbReference type="NCBIfam" id="NF005574">
    <property type="entry name" value="PRK07259.1"/>
    <property type="match status" value="1"/>
</dbReference>
<dbReference type="NCBIfam" id="TIGR01037">
    <property type="entry name" value="pyrD_sub1_fam"/>
    <property type="match status" value="1"/>
</dbReference>
<dbReference type="PANTHER" id="PTHR48109:SF1">
    <property type="entry name" value="DIHYDROOROTATE DEHYDROGENASE (FUMARATE)"/>
    <property type="match status" value="1"/>
</dbReference>
<dbReference type="PANTHER" id="PTHR48109">
    <property type="entry name" value="DIHYDROOROTATE DEHYDROGENASE (QUINONE), MITOCHONDRIAL-RELATED"/>
    <property type="match status" value="1"/>
</dbReference>
<dbReference type="Pfam" id="PF01180">
    <property type="entry name" value="DHO_dh"/>
    <property type="match status" value="1"/>
</dbReference>
<dbReference type="PIRSF" id="PIRSF000164">
    <property type="entry name" value="DHO_oxidase"/>
    <property type="match status" value="1"/>
</dbReference>
<dbReference type="SUPFAM" id="SSF51395">
    <property type="entry name" value="FMN-linked oxidoreductases"/>
    <property type="match status" value="1"/>
</dbReference>
<dbReference type="PROSITE" id="PS00911">
    <property type="entry name" value="DHODEHASE_1"/>
    <property type="match status" value="1"/>
</dbReference>
<dbReference type="PROSITE" id="PS00912">
    <property type="entry name" value="DHODEHASE_2"/>
    <property type="match status" value="1"/>
</dbReference>
<gene>
    <name type="primary">pyrD</name>
    <name type="ordered locus">GK1154</name>
</gene>
<comment type="function">
    <text evidence="1">Catalyzes the conversion of dihydroorotate to orotate with NAD(+) as electron acceptor.</text>
</comment>
<comment type="catalytic activity">
    <reaction>
        <text>(S)-dihydroorotate + NAD(+) = orotate + NADH + H(+)</text>
        <dbReference type="Rhea" id="RHEA:13513"/>
        <dbReference type="ChEBI" id="CHEBI:15378"/>
        <dbReference type="ChEBI" id="CHEBI:30839"/>
        <dbReference type="ChEBI" id="CHEBI:30864"/>
        <dbReference type="ChEBI" id="CHEBI:57540"/>
        <dbReference type="ChEBI" id="CHEBI:57945"/>
        <dbReference type="EC" id="1.3.1.14"/>
    </reaction>
</comment>
<comment type="cofactor">
    <cofactor evidence="1">
        <name>FMN</name>
        <dbReference type="ChEBI" id="CHEBI:58210"/>
    </cofactor>
    <text evidence="1">Binds 1 FMN per subunit.</text>
</comment>
<comment type="pathway">
    <text>Pyrimidine metabolism; UMP biosynthesis via de novo pathway; orotate from (S)-dihydroorotate (NAD(+) route): step 1/1.</text>
</comment>
<comment type="subunit">
    <text evidence="1">Heterotetramer of 2 PyrK and 2 PyrD type B subunits.</text>
</comment>
<comment type="subcellular location">
    <subcellularLocation>
        <location evidence="1">Cytoplasm</location>
    </subcellularLocation>
</comment>
<comment type="similarity">
    <text evidence="2">Belongs to the dihydroorotate dehydrogenase family. Type 1 subfamily.</text>
</comment>
<sequence length="313" mass="32900">MNRLAVELPGLSLKNPIMPASGCFGFGREYARFYDLSVLGAIMIKATTKEPRFGNPTPRVAETPGGMLNAIGLQNPGLDKVLEEELPWLEQFDVPIIANIAGSTVEEYVEVAEAISQAPNVHALELNISCPNVKKGGIAFGTVPDVAAELTRLVKQVSAVPVYVKLSPNVTDIVAMAKAIEQAGADGLTMINTLVGMRIDVKTGRPILANGTGGLSGPAVKPIAIRMIYEVSQAVSIPIIGMGGIQTAEDVLEFFYAGASAVAVGTANFVDPFVCPTIIADLPALLDDLGIGHISECIGRSWKTGAHAVHCRA</sequence>
<evidence type="ECO:0000250" key="1"/>
<evidence type="ECO:0000305" key="2"/>
<organism>
    <name type="scientific">Geobacillus kaustophilus (strain HTA426)</name>
    <dbReference type="NCBI Taxonomy" id="235909"/>
    <lineage>
        <taxon>Bacteria</taxon>
        <taxon>Bacillati</taxon>
        <taxon>Bacillota</taxon>
        <taxon>Bacilli</taxon>
        <taxon>Bacillales</taxon>
        <taxon>Anoxybacillaceae</taxon>
        <taxon>Geobacillus</taxon>
        <taxon>Geobacillus thermoleovorans group</taxon>
    </lineage>
</organism>